<organism>
    <name type="scientific">Drosophila melanogaster</name>
    <name type="common">Fruit fly</name>
    <dbReference type="NCBI Taxonomy" id="7227"/>
    <lineage>
        <taxon>Eukaryota</taxon>
        <taxon>Metazoa</taxon>
        <taxon>Ecdysozoa</taxon>
        <taxon>Arthropoda</taxon>
        <taxon>Hexapoda</taxon>
        <taxon>Insecta</taxon>
        <taxon>Pterygota</taxon>
        <taxon>Neoptera</taxon>
        <taxon>Endopterygota</taxon>
        <taxon>Diptera</taxon>
        <taxon>Brachycera</taxon>
        <taxon>Muscomorpha</taxon>
        <taxon>Ephydroidea</taxon>
        <taxon>Drosophilidae</taxon>
        <taxon>Drosophila</taxon>
        <taxon>Sophophora</taxon>
    </lineage>
</organism>
<accession>P05527</accession>
<accession>A4UZD7</accession>
<accession>Q0E9C1</accession>
<accession>Q5U0Z5</accession>
<accession>Q8T3Z5</accession>
<accession>Q9V600</accession>
<name>HMIN_DROME</name>
<reference key="1">
    <citation type="journal article" date="1987" name="Genes Dev.">
        <title>The invected gene of Drosophila: sequence analysis and expression studies reveal a close kinship to the engrailed gene.</title>
        <authorList>
            <person name="Coleman K.G."/>
            <person name="Poole S.J."/>
            <person name="Weir M.P."/>
            <person name="Soeller W.C."/>
            <person name="Kornberg T."/>
        </authorList>
    </citation>
    <scope>NUCLEOTIDE SEQUENCE [MRNA]</scope>
    <scope>FUNCTION</scope>
    <scope>SUBCELLULAR LOCATION</scope>
    <scope>TISSUE SPECIFICITY</scope>
</reference>
<reference key="2">
    <citation type="journal article" date="2000" name="Science">
        <title>The genome sequence of Drosophila melanogaster.</title>
        <authorList>
            <person name="Adams M.D."/>
            <person name="Celniker S.E."/>
            <person name="Holt R.A."/>
            <person name="Evans C.A."/>
            <person name="Gocayne J.D."/>
            <person name="Amanatides P.G."/>
            <person name="Scherer S.E."/>
            <person name="Li P.W."/>
            <person name="Hoskins R.A."/>
            <person name="Galle R.F."/>
            <person name="George R.A."/>
            <person name="Lewis S.E."/>
            <person name="Richards S."/>
            <person name="Ashburner M."/>
            <person name="Henderson S.N."/>
            <person name="Sutton G.G."/>
            <person name="Wortman J.R."/>
            <person name="Yandell M.D."/>
            <person name="Zhang Q."/>
            <person name="Chen L.X."/>
            <person name="Brandon R.C."/>
            <person name="Rogers Y.-H.C."/>
            <person name="Blazej R.G."/>
            <person name="Champe M."/>
            <person name="Pfeiffer B.D."/>
            <person name="Wan K.H."/>
            <person name="Doyle C."/>
            <person name="Baxter E.G."/>
            <person name="Helt G."/>
            <person name="Nelson C.R."/>
            <person name="Miklos G.L.G."/>
            <person name="Abril J.F."/>
            <person name="Agbayani A."/>
            <person name="An H.-J."/>
            <person name="Andrews-Pfannkoch C."/>
            <person name="Baldwin D."/>
            <person name="Ballew R.M."/>
            <person name="Basu A."/>
            <person name="Baxendale J."/>
            <person name="Bayraktaroglu L."/>
            <person name="Beasley E.M."/>
            <person name="Beeson K.Y."/>
            <person name="Benos P.V."/>
            <person name="Berman B.P."/>
            <person name="Bhandari D."/>
            <person name="Bolshakov S."/>
            <person name="Borkova D."/>
            <person name="Botchan M.R."/>
            <person name="Bouck J."/>
            <person name="Brokstein P."/>
            <person name="Brottier P."/>
            <person name="Burtis K.C."/>
            <person name="Busam D.A."/>
            <person name="Butler H."/>
            <person name="Cadieu E."/>
            <person name="Center A."/>
            <person name="Chandra I."/>
            <person name="Cherry J.M."/>
            <person name="Cawley S."/>
            <person name="Dahlke C."/>
            <person name="Davenport L.B."/>
            <person name="Davies P."/>
            <person name="de Pablos B."/>
            <person name="Delcher A."/>
            <person name="Deng Z."/>
            <person name="Mays A.D."/>
            <person name="Dew I."/>
            <person name="Dietz S.M."/>
            <person name="Dodson K."/>
            <person name="Doup L.E."/>
            <person name="Downes M."/>
            <person name="Dugan-Rocha S."/>
            <person name="Dunkov B.C."/>
            <person name="Dunn P."/>
            <person name="Durbin K.J."/>
            <person name="Evangelista C.C."/>
            <person name="Ferraz C."/>
            <person name="Ferriera S."/>
            <person name="Fleischmann W."/>
            <person name="Fosler C."/>
            <person name="Gabrielian A.E."/>
            <person name="Garg N.S."/>
            <person name="Gelbart W.M."/>
            <person name="Glasser K."/>
            <person name="Glodek A."/>
            <person name="Gong F."/>
            <person name="Gorrell J.H."/>
            <person name="Gu Z."/>
            <person name="Guan P."/>
            <person name="Harris M."/>
            <person name="Harris N.L."/>
            <person name="Harvey D.A."/>
            <person name="Heiman T.J."/>
            <person name="Hernandez J.R."/>
            <person name="Houck J."/>
            <person name="Hostin D."/>
            <person name="Houston K.A."/>
            <person name="Howland T.J."/>
            <person name="Wei M.-H."/>
            <person name="Ibegwam C."/>
            <person name="Jalali M."/>
            <person name="Kalush F."/>
            <person name="Karpen G.H."/>
            <person name="Ke Z."/>
            <person name="Kennison J.A."/>
            <person name="Ketchum K.A."/>
            <person name="Kimmel B.E."/>
            <person name="Kodira C.D."/>
            <person name="Kraft C.L."/>
            <person name="Kravitz S."/>
            <person name="Kulp D."/>
            <person name="Lai Z."/>
            <person name="Lasko P."/>
            <person name="Lei Y."/>
            <person name="Levitsky A.A."/>
            <person name="Li J.H."/>
            <person name="Li Z."/>
            <person name="Liang Y."/>
            <person name="Lin X."/>
            <person name="Liu X."/>
            <person name="Mattei B."/>
            <person name="McIntosh T.C."/>
            <person name="McLeod M.P."/>
            <person name="McPherson D."/>
            <person name="Merkulov G."/>
            <person name="Milshina N.V."/>
            <person name="Mobarry C."/>
            <person name="Morris J."/>
            <person name="Moshrefi A."/>
            <person name="Mount S.M."/>
            <person name="Moy M."/>
            <person name="Murphy B."/>
            <person name="Murphy L."/>
            <person name="Muzny D.M."/>
            <person name="Nelson D.L."/>
            <person name="Nelson D.R."/>
            <person name="Nelson K.A."/>
            <person name="Nixon K."/>
            <person name="Nusskern D.R."/>
            <person name="Pacleb J.M."/>
            <person name="Palazzolo M."/>
            <person name="Pittman G.S."/>
            <person name="Pan S."/>
            <person name="Pollard J."/>
            <person name="Puri V."/>
            <person name="Reese M.G."/>
            <person name="Reinert K."/>
            <person name="Remington K."/>
            <person name="Saunders R.D.C."/>
            <person name="Scheeler F."/>
            <person name="Shen H."/>
            <person name="Shue B.C."/>
            <person name="Siden-Kiamos I."/>
            <person name="Simpson M."/>
            <person name="Skupski M.P."/>
            <person name="Smith T.J."/>
            <person name="Spier E."/>
            <person name="Spradling A.C."/>
            <person name="Stapleton M."/>
            <person name="Strong R."/>
            <person name="Sun E."/>
            <person name="Svirskas R."/>
            <person name="Tector C."/>
            <person name="Turner R."/>
            <person name="Venter E."/>
            <person name="Wang A.H."/>
            <person name="Wang X."/>
            <person name="Wang Z.-Y."/>
            <person name="Wassarman D.A."/>
            <person name="Weinstock G.M."/>
            <person name="Weissenbach J."/>
            <person name="Williams S.M."/>
            <person name="Woodage T."/>
            <person name="Worley K.C."/>
            <person name="Wu D."/>
            <person name="Yang S."/>
            <person name="Yao Q.A."/>
            <person name="Ye J."/>
            <person name="Yeh R.-F."/>
            <person name="Zaveri J.S."/>
            <person name="Zhan M."/>
            <person name="Zhang G."/>
            <person name="Zhao Q."/>
            <person name="Zheng L."/>
            <person name="Zheng X.H."/>
            <person name="Zhong F.N."/>
            <person name="Zhong W."/>
            <person name="Zhou X."/>
            <person name="Zhu S.C."/>
            <person name="Zhu X."/>
            <person name="Smith H.O."/>
            <person name="Gibbs R.A."/>
            <person name="Myers E.W."/>
            <person name="Rubin G.M."/>
            <person name="Venter J.C."/>
        </authorList>
    </citation>
    <scope>NUCLEOTIDE SEQUENCE [LARGE SCALE GENOMIC DNA]</scope>
    <source>
        <strain>Berkeley</strain>
    </source>
</reference>
<reference key="3">
    <citation type="journal article" date="2002" name="Genome Biol.">
        <title>Annotation of the Drosophila melanogaster euchromatic genome: a systematic review.</title>
        <authorList>
            <person name="Misra S."/>
            <person name="Crosby M.A."/>
            <person name="Mungall C.J."/>
            <person name="Matthews B.B."/>
            <person name="Campbell K.S."/>
            <person name="Hradecky P."/>
            <person name="Huang Y."/>
            <person name="Kaminker J.S."/>
            <person name="Millburn G.H."/>
            <person name="Prochnik S.E."/>
            <person name="Smith C.D."/>
            <person name="Tupy J.L."/>
            <person name="Whitfield E.J."/>
            <person name="Bayraktaroglu L."/>
            <person name="Berman B.P."/>
            <person name="Bettencourt B.R."/>
            <person name="Celniker S.E."/>
            <person name="de Grey A.D.N.J."/>
            <person name="Drysdale R.A."/>
            <person name="Harris N.L."/>
            <person name="Richter J."/>
            <person name="Russo S."/>
            <person name="Schroeder A.J."/>
            <person name="Shu S.Q."/>
            <person name="Stapleton M."/>
            <person name="Yamada C."/>
            <person name="Ashburner M."/>
            <person name="Gelbart W.M."/>
            <person name="Rubin G.M."/>
            <person name="Lewis S.E."/>
        </authorList>
    </citation>
    <scope>GENOME REANNOTATION</scope>
    <source>
        <strain>Berkeley</strain>
    </source>
</reference>
<reference key="4">
    <citation type="journal article" date="2002" name="Genome Biol.">
        <title>A Drosophila full-length cDNA resource.</title>
        <authorList>
            <person name="Stapleton M."/>
            <person name="Carlson J.W."/>
            <person name="Brokstein P."/>
            <person name="Yu C."/>
            <person name="Champe M."/>
            <person name="George R.A."/>
            <person name="Guarin H."/>
            <person name="Kronmiller B."/>
            <person name="Pacleb J.M."/>
            <person name="Park S."/>
            <person name="Wan K.H."/>
            <person name="Rubin G.M."/>
            <person name="Celniker S.E."/>
        </authorList>
    </citation>
    <scope>NUCLEOTIDE SEQUENCE [LARGE SCALE MRNA]</scope>
    <source>
        <strain>Berkeley</strain>
        <tissue>Testis</tissue>
    </source>
</reference>
<reference key="5">
    <citation type="submission" date="2005-08" db="EMBL/GenBank/DDBJ databases">
        <authorList>
            <person name="Stapleton M."/>
            <person name="Carlson J.W."/>
            <person name="Chavez C."/>
            <person name="Frise E."/>
            <person name="George R.A."/>
            <person name="Pacleb J.M."/>
            <person name="Park S."/>
            <person name="Wan K.H."/>
            <person name="Yu C."/>
            <person name="Celniker S.E."/>
        </authorList>
    </citation>
    <scope>NUCLEOTIDE SEQUENCE [LARGE SCALE MRNA]</scope>
    <source>
        <strain>Berkeley</strain>
        <tissue>Embryo</tissue>
    </source>
</reference>
<reference key="6">
    <citation type="journal article" date="1997" name="Development">
        <title>Requirement for engrailed and invected genes reveals novel regulatory interactions between engrailed/invected, patched, gooseberry and wingless during Drosophila neurogenesis.</title>
        <authorList>
            <person name="Bhat K.M."/>
            <person name="Schedl P."/>
        </authorList>
    </citation>
    <scope>FUNCTION</scope>
    <scope>TISSUE SPECIFICITY</scope>
</reference>
<protein>
    <recommendedName>
        <fullName>Homeobox protein invected</fullName>
    </recommendedName>
</protein>
<keyword id="KW-0217">Developmental protein</keyword>
<keyword id="KW-0238">DNA-binding</keyword>
<keyword id="KW-0371">Homeobox</keyword>
<keyword id="KW-0539">Nucleus</keyword>
<keyword id="KW-1185">Reference proteome</keyword>
<keyword id="KW-0804">Transcription</keyword>
<keyword id="KW-0805">Transcription regulation</keyword>
<gene>
    <name type="primary">inv</name>
    <name type="ORF">CG17835</name>
</gene>
<sequence length="576" mass="60863">MSTLASTRPPPLKLTIPSLEEAEDHAQERRAGGGGQEVGKMHPDCLPLPLVQPGNSPQVREEEEDEQTECEEQLNIEDEEVEEEHDLDLEDPASCCSENSVLSVGQEQSEAAQAALSAQAQARQRLLISQIYRPSAFSSTATTVLPPSEGPPFSPEDLLQLPPSTGTFQEEFLRKSQLYAEELMKQQMHLMAAARVNALTAAAAGKQLQMAMAAAAVATVPSGQDALAQLTATALGLGPGGAVHPHQQLLLQRDQVHHHHHMQNHLNNNENLHERALKFSIDNILKADFGSRLPKIGALSGNIGGGSVSGSSTGSSKNSGNTNGNRSPLKAPKKSGKPLNLAQSNAAANSSLSFSSSLANICSNSNDSNSTATSSSTTNTSGAPVDLVKSPPPAAGAGATGASGKSGEDSGTPIVWPAWVYCTRYSDRPSSGRSPRARKPKKPATSSSAAGGGGGGVEKGEAADGGGVPEDKRPRTAFSGTQLARLKHEFNENRYLTEKRRQQLSGELGLNEAQIKIWFQNKRAKLKKSSGTKNPLALQLMAQGLYNHSTIPLTREEEELQELQEAASAAAAKEPC</sequence>
<proteinExistence type="evidence at transcript level"/>
<feature type="chain" id="PRO_0000196081" description="Homeobox protein invected">
    <location>
        <begin position="1"/>
        <end position="576"/>
    </location>
</feature>
<feature type="DNA-binding region" description="Homeobox" evidence="1">
    <location>
        <begin position="471"/>
        <end position="530"/>
    </location>
</feature>
<feature type="region of interest" description="Disordered" evidence="2">
    <location>
        <begin position="1"/>
        <end position="68"/>
    </location>
</feature>
<feature type="region of interest" description="Disordered" evidence="2">
    <location>
        <begin position="80"/>
        <end position="102"/>
    </location>
</feature>
<feature type="region of interest" description="Disordered" evidence="2">
    <location>
        <begin position="305"/>
        <end position="344"/>
    </location>
</feature>
<feature type="region of interest" description="Disordered" evidence="2">
    <location>
        <begin position="364"/>
        <end position="410"/>
    </location>
</feature>
<feature type="region of interest" description="Disordered" evidence="2">
    <location>
        <begin position="426"/>
        <end position="476"/>
    </location>
</feature>
<feature type="compositionally biased region" description="Acidic residues" evidence="2">
    <location>
        <begin position="80"/>
        <end position="91"/>
    </location>
</feature>
<feature type="compositionally biased region" description="Low complexity" evidence="2">
    <location>
        <begin position="309"/>
        <end position="325"/>
    </location>
</feature>
<feature type="compositionally biased region" description="Low complexity" evidence="2">
    <location>
        <begin position="364"/>
        <end position="381"/>
    </location>
</feature>
<feature type="compositionally biased region" description="Low complexity" evidence="2">
    <location>
        <begin position="395"/>
        <end position="405"/>
    </location>
</feature>
<feature type="compositionally biased region" description="Gly residues" evidence="2">
    <location>
        <begin position="450"/>
        <end position="468"/>
    </location>
</feature>
<feature type="sequence conflict" description="In Ref. 4; AAL90161." evidence="5" ref="4">
    <original>G</original>
    <variation>V</variation>
    <location>
        <position position="39"/>
    </location>
</feature>
<feature type="sequence conflict" description="In Ref. 4; AAL90161." evidence="5" ref="4">
    <original>C</original>
    <variation>V</variation>
    <location>
        <position position="45"/>
    </location>
</feature>
<feature type="sequence conflict" description="In Ref. 4; AAL90161." evidence="5" ref="4">
    <original>V</original>
    <variation>A</variation>
    <location>
        <position position="81"/>
    </location>
</feature>
<feature type="sequence conflict" description="In Ref. 1; CAA28885." evidence="5" ref="1">
    <original>L</original>
    <variation>M</variation>
    <location>
        <position position="159"/>
    </location>
</feature>
<feature type="sequence conflict" description="In Ref. 1; CAA28885 and 4; AAL90161." evidence="5" ref="1 4">
    <original>N</original>
    <variation>T</variation>
    <location>
        <position position="321"/>
    </location>
</feature>
<feature type="sequence conflict" description="In Ref. 1; CAA28885." evidence="5" ref="1">
    <original>A</original>
    <variation>R</variation>
    <location>
        <position position="570"/>
    </location>
</feature>
<comment type="function">
    <text evidence="3 4">Engrailed (en) and invected (inv) are functionally redundant transcription factors in neuronal precursor cell NB5-3 specification. Inv is unable to substitute for en in other regulatory processes such as maintaining gsb expression in the neuroectoderm after stage 10 of embryogenesis. Maintenance of gsb expression in row 5 of the neuroectoderm involves an as yet unidentified short range signaling molecule.</text>
</comment>
<comment type="subcellular location">
    <subcellularLocation>
        <location evidence="1 3">Nucleus</location>
    </subcellularLocation>
</comment>
<comment type="tissue specificity">
    <text evidence="3 4">Expressed in row 6/7 of the embryonic neuroectoderm.</text>
</comment>
<comment type="similarity">
    <text evidence="5">Belongs to the engrailed homeobox family.</text>
</comment>
<evidence type="ECO:0000255" key="1">
    <source>
        <dbReference type="PROSITE-ProRule" id="PRU00108"/>
    </source>
</evidence>
<evidence type="ECO:0000256" key="2">
    <source>
        <dbReference type="SAM" id="MobiDB-lite"/>
    </source>
</evidence>
<evidence type="ECO:0000269" key="3">
    <source>
    </source>
</evidence>
<evidence type="ECO:0000269" key="4">
    <source>
    </source>
</evidence>
<evidence type="ECO:0000305" key="5"/>
<dbReference type="EMBL" id="X05273">
    <property type="protein sequence ID" value="CAA28885.1"/>
    <property type="molecule type" value="mRNA"/>
</dbReference>
<dbReference type="EMBL" id="AE013599">
    <property type="protein sequence ID" value="AAF58640.3"/>
    <property type="molecule type" value="Genomic_DNA"/>
</dbReference>
<dbReference type="EMBL" id="AE013599">
    <property type="protein sequence ID" value="AAM68707.3"/>
    <property type="molecule type" value="Genomic_DNA"/>
</dbReference>
<dbReference type="EMBL" id="AE013599">
    <property type="protein sequence ID" value="AAM68708.3"/>
    <property type="molecule type" value="Genomic_DNA"/>
</dbReference>
<dbReference type="EMBL" id="AY089423">
    <property type="protein sequence ID" value="AAL90161.1"/>
    <property type="molecule type" value="mRNA"/>
</dbReference>
<dbReference type="EMBL" id="BT016097">
    <property type="protein sequence ID" value="AAV36982.1"/>
    <property type="molecule type" value="mRNA"/>
</dbReference>
<dbReference type="PIR" id="A26628">
    <property type="entry name" value="A26628"/>
</dbReference>
<dbReference type="RefSeq" id="NP_523699.3">
    <property type="nucleotide sequence ID" value="NM_078975.4"/>
</dbReference>
<dbReference type="RefSeq" id="NP_725056.2">
    <property type="nucleotide sequence ID" value="NM_165838.3"/>
</dbReference>
<dbReference type="RefSeq" id="NP_725057.2">
    <property type="nucleotide sequence ID" value="NM_165839.3"/>
</dbReference>
<dbReference type="SMR" id="P05527"/>
<dbReference type="BioGRID" id="62027">
    <property type="interactions" value="21"/>
</dbReference>
<dbReference type="FunCoup" id="P05527">
    <property type="interactions" value="163"/>
</dbReference>
<dbReference type="IntAct" id="P05527">
    <property type="interactions" value="9"/>
</dbReference>
<dbReference type="STRING" id="7227.FBpp0311724"/>
<dbReference type="PaxDb" id="7227-FBpp0087173"/>
<dbReference type="DNASU" id="36239"/>
<dbReference type="EnsemblMetazoa" id="FBtr0088068">
    <property type="protein sequence ID" value="FBpp0087174"/>
    <property type="gene ID" value="FBgn0001269"/>
</dbReference>
<dbReference type="EnsemblMetazoa" id="FBtr0088069">
    <property type="protein sequence ID" value="FBpp0087175"/>
    <property type="gene ID" value="FBgn0001269"/>
</dbReference>
<dbReference type="EnsemblMetazoa" id="FBtr0345673">
    <property type="protein sequence ID" value="FBpp0311724"/>
    <property type="gene ID" value="FBgn0001269"/>
</dbReference>
<dbReference type="GeneID" id="36239"/>
<dbReference type="KEGG" id="dme:Dmel_CG17835"/>
<dbReference type="AGR" id="FB:FBgn0001269"/>
<dbReference type="CTD" id="36239"/>
<dbReference type="FlyBase" id="FBgn0001269">
    <property type="gene designation" value="inv"/>
</dbReference>
<dbReference type="VEuPathDB" id="VectorBase:FBgn0001269"/>
<dbReference type="eggNOG" id="KOG0489">
    <property type="taxonomic scope" value="Eukaryota"/>
</dbReference>
<dbReference type="GeneTree" id="ENSGT00940000167868"/>
<dbReference type="HOGENOM" id="CLU_034034_0_0_1"/>
<dbReference type="InParanoid" id="P05527"/>
<dbReference type="OMA" id="TSICNER"/>
<dbReference type="OrthoDB" id="6159439at2759"/>
<dbReference type="PhylomeDB" id="P05527"/>
<dbReference type="SignaLink" id="P05527"/>
<dbReference type="BioGRID-ORCS" id="36239">
    <property type="hits" value="1 hit in 3 CRISPR screens"/>
</dbReference>
<dbReference type="GenomeRNAi" id="36239"/>
<dbReference type="PRO" id="PR:P05527"/>
<dbReference type="Proteomes" id="UP000000803">
    <property type="component" value="Chromosome 2R"/>
</dbReference>
<dbReference type="Bgee" id="FBgn0001269">
    <property type="expression patterns" value="Expressed in cleaving embryo and 42 other cell types or tissues"/>
</dbReference>
<dbReference type="GO" id="GO:0005634">
    <property type="term" value="C:nucleus"/>
    <property type="evidence" value="ECO:0000318"/>
    <property type="project" value="GO_Central"/>
</dbReference>
<dbReference type="GO" id="GO:0000981">
    <property type="term" value="F:DNA-binding transcription factor activity, RNA polymerase II-specific"/>
    <property type="evidence" value="ECO:0000318"/>
    <property type="project" value="GO_Central"/>
</dbReference>
<dbReference type="GO" id="GO:0000978">
    <property type="term" value="F:RNA polymerase II cis-regulatory region sequence-specific DNA binding"/>
    <property type="evidence" value="ECO:0000318"/>
    <property type="project" value="GO_Central"/>
</dbReference>
<dbReference type="GO" id="GO:0007386">
    <property type="term" value="P:compartment pattern specification"/>
    <property type="evidence" value="ECO:0000304"/>
    <property type="project" value="FlyBase"/>
</dbReference>
<dbReference type="GO" id="GO:0007474">
    <property type="term" value="P:imaginal disc-derived wing vein specification"/>
    <property type="evidence" value="ECO:0000315"/>
    <property type="project" value="FlyBase"/>
</dbReference>
<dbReference type="GO" id="GO:0007400">
    <property type="term" value="P:neuroblast fate determination"/>
    <property type="evidence" value="ECO:0000316"/>
    <property type="project" value="FlyBase"/>
</dbReference>
<dbReference type="GO" id="GO:0006357">
    <property type="term" value="P:regulation of transcription by RNA polymerase II"/>
    <property type="evidence" value="ECO:0000318"/>
    <property type="project" value="GO_Central"/>
</dbReference>
<dbReference type="GO" id="GO:0048100">
    <property type="term" value="P:wing disc anterior/posterior pattern formation"/>
    <property type="evidence" value="ECO:0000304"/>
    <property type="project" value="FlyBase"/>
</dbReference>
<dbReference type="CDD" id="cd00086">
    <property type="entry name" value="homeodomain"/>
    <property type="match status" value="1"/>
</dbReference>
<dbReference type="FunFam" id="1.10.10.60:FF:000345">
    <property type="entry name" value="Homeobox protein engrailed-like"/>
    <property type="match status" value="1"/>
</dbReference>
<dbReference type="Gene3D" id="1.10.10.60">
    <property type="entry name" value="Homeodomain-like"/>
    <property type="match status" value="1"/>
</dbReference>
<dbReference type="InterPro" id="IPR050720">
    <property type="entry name" value="Engrailed_Homeobox_TFs"/>
</dbReference>
<dbReference type="InterPro" id="IPR001356">
    <property type="entry name" value="HD"/>
</dbReference>
<dbReference type="InterPro" id="IPR000747">
    <property type="entry name" value="HD_engrailed"/>
</dbReference>
<dbReference type="InterPro" id="IPR020479">
    <property type="entry name" value="HD_metazoa"/>
</dbReference>
<dbReference type="InterPro" id="IPR019549">
    <property type="entry name" value="Homeobox-engrailed_C-terminal"/>
</dbReference>
<dbReference type="InterPro" id="IPR019737">
    <property type="entry name" value="Homeobox-engrailed_CS"/>
</dbReference>
<dbReference type="InterPro" id="IPR017970">
    <property type="entry name" value="Homeobox_CS"/>
</dbReference>
<dbReference type="InterPro" id="IPR009057">
    <property type="entry name" value="Homeodomain-like_sf"/>
</dbReference>
<dbReference type="InterPro" id="IPR000047">
    <property type="entry name" value="HTH_motif"/>
</dbReference>
<dbReference type="PANTHER" id="PTHR24341">
    <property type="entry name" value="HOMEOBOX PROTEIN ENGRAILED"/>
    <property type="match status" value="1"/>
</dbReference>
<dbReference type="PANTHER" id="PTHR24341:SF6">
    <property type="entry name" value="HOMEOBOX PROTEIN INVECTED"/>
    <property type="match status" value="1"/>
</dbReference>
<dbReference type="Pfam" id="PF10525">
    <property type="entry name" value="Engrail_1_C_sig"/>
    <property type="match status" value="1"/>
</dbReference>
<dbReference type="Pfam" id="PF00046">
    <property type="entry name" value="Homeodomain"/>
    <property type="match status" value="1"/>
</dbReference>
<dbReference type="PRINTS" id="PR00026">
    <property type="entry name" value="ENGRAILED"/>
</dbReference>
<dbReference type="PRINTS" id="PR00024">
    <property type="entry name" value="HOMEOBOX"/>
</dbReference>
<dbReference type="PRINTS" id="PR00031">
    <property type="entry name" value="HTHREPRESSR"/>
</dbReference>
<dbReference type="SMART" id="SM00389">
    <property type="entry name" value="HOX"/>
    <property type="match status" value="1"/>
</dbReference>
<dbReference type="SUPFAM" id="SSF46689">
    <property type="entry name" value="Homeodomain-like"/>
    <property type="match status" value="1"/>
</dbReference>
<dbReference type="PROSITE" id="PS00033">
    <property type="entry name" value="ENGRAILED"/>
    <property type="match status" value="1"/>
</dbReference>
<dbReference type="PROSITE" id="PS00027">
    <property type="entry name" value="HOMEOBOX_1"/>
    <property type="match status" value="1"/>
</dbReference>
<dbReference type="PROSITE" id="PS50071">
    <property type="entry name" value="HOMEOBOX_2"/>
    <property type="match status" value="1"/>
</dbReference>